<keyword id="KW-0067">ATP-binding</keyword>
<keyword id="KW-0436">Ligase</keyword>
<keyword id="KW-0547">Nucleotide-binding</keyword>
<keyword id="KW-0554">One-carbon metabolism</keyword>
<evidence type="ECO:0000255" key="1">
    <source>
        <dbReference type="HAMAP-Rule" id="MF_01543"/>
    </source>
</evidence>
<organism>
    <name type="scientific">Vibrio vulnificus (strain CMCP6)</name>
    <dbReference type="NCBI Taxonomy" id="216895"/>
    <lineage>
        <taxon>Bacteria</taxon>
        <taxon>Pseudomonadati</taxon>
        <taxon>Pseudomonadota</taxon>
        <taxon>Gammaproteobacteria</taxon>
        <taxon>Vibrionales</taxon>
        <taxon>Vibrionaceae</taxon>
        <taxon>Vibrio</taxon>
    </lineage>
</organism>
<reference key="1">
    <citation type="submission" date="2002-12" db="EMBL/GenBank/DDBJ databases">
        <title>Complete genome sequence of Vibrio vulnificus CMCP6.</title>
        <authorList>
            <person name="Rhee J.H."/>
            <person name="Kim S.Y."/>
            <person name="Chung S.S."/>
            <person name="Kim J.J."/>
            <person name="Moon Y.H."/>
            <person name="Jeong H."/>
            <person name="Choy H.E."/>
        </authorList>
    </citation>
    <scope>NUCLEOTIDE SEQUENCE [LARGE SCALE GENOMIC DNA]</scope>
    <source>
        <strain>CMCP6</strain>
    </source>
</reference>
<reference key="2">
    <citation type="journal article" date="2011" name="Mol. Syst. Biol.">
        <title>Integrative genome-scale metabolic analysis of Vibrio vulnificus for drug targeting and discovery.</title>
        <authorList>
            <person name="Kim H.U."/>
            <person name="Kim S.Y."/>
            <person name="Jeong H."/>
            <person name="Kim T.Y."/>
            <person name="Kim J.J."/>
            <person name="Choy H.E."/>
            <person name="Yi K.Y."/>
            <person name="Rhee J.H."/>
            <person name="Lee S.Y."/>
        </authorList>
    </citation>
    <scope>SEQUENCE REVISION</scope>
    <source>
        <strain>CMCP6</strain>
    </source>
</reference>
<name>FTHS_VIBVU</name>
<sequence length="582" mass="62201">MLSDIDICRTTPLKPIEQIAAKAGLLADEFETHGLYKAKVSARCVKRLAEQQDGKLVLVTAITPTPLGEGKTVTTIGLAQGLQSLNQSVMACIRQPSMGPVFGVKGGAAGGGYSQVAPMDELNLHLTGDIHAVTAAHNLAAAAIDARIYHEQRAGYQAFEARTGLPALRIDPDRVVWKRVMDHNDRALRKVRVGINDEGKTINGFEREEGFDISAASELMAILALSKNLQDMRERIGKVVLAYNLDSEPVSAEQLQVAGAMTVTLKEAIKPTLMQTLEGVPTLIHAGPFANIAHGNSSIIADEIALKLSSYVVTEAGFGSDMGLEKACNIKSSTSHKAPDCVVIVATLRGLKANSGLYDLKPGMPLPDALFQPDRAALESGFSNLKWHIDNAQKYGLPVVVAINQFPQDSAEELGQLKLWIQQLPLNVRVAISEGFAKGGKGMEAVAREVIEACDAPANFRPLYRAEQTLEEKIITVCTKGYGCGEVQFSDTAKQQLALYQTLGFGELAVCMAKTPLSISSDSSLKGAPSGFTIMVREVRLCAGAGFVYALTGNVMTMPGLPDIPAFMALDIDENGDIVGLS</sequence>
<protein>
    <recommendedName>
        <fullName evidence="1">Formate--tetrahydrofolate ligase</fullName>
        <ecNumber evidence="1">6.3.4.3</ecNumber>
    </recommendedName>
    <alternativeName>
        <fullName evidence="1">Formyltetrahydrofolate synthetase</fullName>
        <shortName evidence="1">FHS</shortName>
        <shortName evidence="1">FTHFS</shortName>
    </alternativeName>
</protein>
<gene>
    <name evidence="1" type="primary">fhs</name>
    <name type="ordered locus">VV2_0216</name>
    <name type="ORF">VV2_0217</name>
</gene>
<dbReference type="EC" id="6.3.4.3" evidence="1"/>
<dbReference type="EMBL" id="AE016796">
    <property type="protein sequence ID" value="AAO07187.2"/>
    <property type="molecule type" value="Genomic_DNA"/>
</dbReference>
<dbReference type="RefSeq" id="WP_011081194.1">
    <property type="nucleotide sequence ID" value="NC_004460.2"/>
</dbReference>
<dbReference type="SMR" id="Q8D7D8"/>
<dbReference type="KEGG" id="vvu:VV2_0216"/>
<dbReference type="HOGENOM" id="CLU_003601_3_3_6"/>
<dbReference type="UniPathway" id="UPA00193"/>
<dbReference type="Proteomes" id="UP000002275">
    <property type="component" value="Chromosome 2"/>
</dbReference>
<dbReference type="GO" id="GO:0005524">
    <property type="term" value="F:ATP binding"/>
    <property type="evidence" value="ECO:0007669"/>
    <property type="project" value="UniProtKB-UniRule"/>
</dbReference>
<dbReference type="GO" id="GO:0004329">
    <property type="term" value="F:formate-tetrahydrofolate ligase activity"/>
    <property type="evidence" value="ECO:0007669"/>
    <property type="project" value="UniProtKB-UniRule"/>
</dbReference>
<dbReference type="GO" id="GO:0035999">
    <property type="term" value="P:tetrahydrofolate interconversion"/>
    <property type="evidence" value="ECO:0007669"/>
    <property type="project" value="UniProtKB-UniRule"/>
</dbReference>
<dbReference type="CDD" id="cd00477">
    <property type="entry name" value="FTHFS"/>
    <property type="match status" value="1"/>
</dbReference>
<dbReference type="FunFam" id="3.40.50.300:FF:000245">
    <property type="entry name" value="C-1-tetrahydrofolate synthase, cytoplasmic"/>
    <property type="match status" value="1"/>
</dbReference>
<dbReference type="FunFam" id="3.30.1510.10:FF:000001">
    <property type="entry name" value="Formate--tetrahydrofolate ligase"/>
    <property type="match status" value="1"/>
</dbReference>
<dbReference type="FunFam" id="3.10.410.10:FF:000001">
    <property type="entry name" value="Putative formate--tetrahydrofolate ligase"/>
    <property type="match status" value="1"/>
</dbReference>
<dbReference type="Gene3D" id="3.30.1510.10">
    <property type="entry name" value="Domain 2, N(10)-formyltetrahydrofolate synthetase"/>
    <property type="match status" value="1"/>
</dbReference>
<dbReference type="Gene3D" id="3.10.410.10">
    <property type="entry name" value="Formyltetrahydrofolate synthetase, domain 3"/>
    <property type="match status" value="1"/>
</dbReference>
<dbReference type="Gene3D" id="3.40.50.300">
    <property type="entry name" value="P-loop containing nucleotide triphosphate hydrolases"/>
    <property type="match status" value="1"/>
</dbReference>
<dbReference type="HAMAP" id="MF_01543">
    <property type="entry name" value="FTHFS"/>
    <property type="match status" value="1"/>
</dbReference>
<dbReference type="InterPro" id="IPR000559">
    <property type="entry name" value="Formate_THF_ligase"/>
</dbReference>
<dbReference type="InterPro" id="IPR020628">
    <property type="entry name" value="Formate_THF_ligase_CS"/>
</dbReference>
<dbReference type="InterPro" id="IPR027417">
    <property type="entry name" value="P-loop_NTPase"/>
</dbReference>
<dbReference type="NCBIfam" id="NF010030">
    <property type="entry name" value="PRK13505.1"/>
    <property type="match status" value="1"/>
</dbReference>
<dbReference type="NCBIfam" id="NF010031">
    <property type="entry name" value="PRK13506.1"/>
    <property type="match status" value="1"/>
</dbReference>
<dbReference type="Pfam" id="PF01268">
    <property type="entry name" value="FTHFS"/>
    <property type="match status" value="1"/>
</dbReference>
<dbReference type="SUPFAM" id="SSF52540">
    <property type="entry name" value="P-loop containing nucleoside triphosphate hydrolases"/>
    <property type="match status" value="1"/>
</dbReference>
<dbReference type="PROSITE" id="PS00721">
    <property type="entry name" value="FTHFS_1"/>
    <property type="match status" value="1"/>
</dbReference>
<dbReference type="PROSITE" id="PS00722">
    <property type="entry name" value="FTHFS_2"/>
    <property type="match status" value="1"/>
</dbReference>
<accession>Q8D7D8</accession>
<accession>Q8D7D9</accession>
<feature type="chain" id="PRO_0000199410" description="Formate--tetrahydrofolate ligase">
    <location>
        <begin position="1"/>
        <end position="582"/>
    </location>
</feature>
<feature type="binding site" evidence="1">
    <location>
        <begin position="65"/>
        <end position="72"/>
    </location>
    <ligand>
        <name>ATP</name>
        <dbReference type="ChEBI" id="CHEBI:30616"/>
    </ligand>
</feature>
<comment type="catalytic activity">
    <reaction evidence="1">
        <text>(6S)-5,6,7,8-tetrahydrofolate + formate + ATP = (6R)-10-formyltetrahydrofolate + ADP + phosphate</text>
        <dbReference type="Rhea" id="RHEA:20221"/>
        <dbReference type="ChEBI" id="CHEBI:15740"/>
        <dbReference type="ChEBI" id="CHEBI:30616"/>
        <dbReference type="ChEBI" id="CHEBI:43474"/>
        <dbReference type="ChEBI" id="CHEBI:57453"/>
        <dbReference type="ChEBI" id="CHEBI:195366"/>
        <dbReference type="ChEBI" id="CHEBI:456216"/>
        <dbReference type="EC" id="6.3.4.3"/>
    </reaction>
</comment>
<comment type="pathway">
    <text evidence="1">One-carbon metabolism; tetrahydrofolate interconversion.</text>
</comment>
<comment type="similarity">
    <text evidence="1">Belongs to the formate--tetrahydrofolate ligase family.</text>
</comment>
<proteinExistence type="inferred from homology"/>